<gene>
    <name type="primary">pre</name>
    <name type="synonym">mob</name>
</gene>
<evidence type="ECO:0000255" key="1"/>
<evidence type="ECO:0000256" key="2">
    <source>
        <dbReference type="SAM" id="MobiDB-lite"/>
    </source>
</evidence>
<evidence type="ECO:0000305" key="3"/>
<dbReference type="EMBL" id="V01278">
    <property type="protein sequence ID" value="CAA24593.1"/>
    <property type="molecule type" value="Genomic_DNA"/>
</dbReference>
<dbReference type="PIR" id="A04486">
    <property type="entry name" value="QQSA4E"/>
</dbReference>
<dbReference type="RefSeq" id="WP_011178348.1">
    <property type="nucleotide sequence ID" value="NC_005908.1"/>
</dbReference>
<dbReference type="RefSeq" id="YP_025317.1">
    <property type="nucleotide sequence ID" value="NC_005908.1"/>
</dbReference>
<dbReference type="SMR" id="P03857"/>
<dbReference type="GO" id="GO:0003677">
    <property type="term" value="F:DNA binding"/>
    <property type="evidence" value="ECO:0007669"/>
    <property type="project" value="UniProtKB-KW"/>
</dbReference>
<dbReference type="GO" id="GO:0006310">
    <property type="term" value="P:DNA recombination"/>
    <property type="evidence" value="ECO:0007669"/>
    <property type="project" value="InterPro"/>
</dbReference>
<dbReference type="CDD" id="cd17242">
    <property type="entry name" value="MobM_relaxase"/>
    <property type="match status" value="1"/>
</dbReference>
<dbReference type="Gene3D" id="3.30.930.30">
    <property type="match status" value="1"/>
</dbReference>
<dbReference type="InterPro" id="IPR001668">
    <property type="entry name" value="Mob_Pre"/>
</dbReference>
<dbReference type="NCBIfam" id="NF041497">
    <property type="entry name" value="MobV"/>
    <property type="match status" value="1"/>
</dbReference>
<dbReference type="Pfam" id="PF01076">
    <property type="entry name" value="Mob_Pre"/>
    <property type="match status" value="1"/>
</dbReference>
<keyword id="KW-0238">DNA-binding</keyword>
<keyword id="KW-0614">Plasmid</keyword>
<geneLocation type="plasmid">
    <name>pE194</name>
</geneLocation>
<feature type="chain" id="PRO_0000068420" description="Plasmid recombination enzyme type 1">
    <location>
        <begin position="1"/>
        <end position="403"/>
    </location>
</feature>
<feature type="region of interest" description="Disordered" evidence="2">
    <location>
        <begin position="10"/>
        <end position="31"/>
    </location>
</feature>
<feature type="compositionally biased region" description="Polar residues" evidence="2">
    <location>
        <begin position="13"/>
        <end position="22"/>
    </location>
</feature>
<feature type="binding site" evidence="1">
    <location>
        <position position="45"/>
    </location>
    <ligand>
        <name>DNA</name>
        <dbReference type="ChEBI" id="CHEBI:16991"/>
    </ligand>
</feature>
<feature type="binding site" evidence="1">
    <location>
        <position position="115"/>
    </location>
    <ligand>
        <name>DNA</name>
        <dbReference type="ChEBI" id="CHEBI:16991"/>
    </ligand>
</feature>
<name>PRE1_STAAU</name>
<organism>
    <name type="scientific">Staphylococcus aureus</name>
    <dbReference type="NCBI Taxonomy" id="1280"/>
    <lineage>
        <taxon>Bacteria</taxon>
        <taxon>Bacillati</taxon>
        <taxon>Bacillota</taxon>
        <taxon>Bacilli</taxon>
        <taxon>Bacillales</taxon>
        <taxon>Staphylococcaceae</taxon>
        <taxon>Staphylococcus</taxon>
    </lineage>
</organism>
<reference key="1">
    <citation type="journal article" date="1982" name="J. Bacteriol.">
        <title>Nucleotide sequence and functional map of pE194, a plasmid that specifies inducible resistance to macrolide, lincosamide, and streptogramin type B antibodies.</title>
        <authorList>
            <person name="Horinouchi S."/>
            <person name="Weisblum B."/>
        </authorList>
    </citation>
    <scope>NUCLEOTIDE SEQUENCE [GENOMIC DNA]</scope>
</reference>
<comment type="function">
    <text>The interaction of the RSA site and the PRE protein may not only serves a function in plasmid maintenance, but may also contributes to the distribution of small antibiotic resistance plasmids among Gram-positive bacteria.</text>
</comment>
<comment type="miscellaneous">
    <text>Contains conserved positively charged amino acids probably involved in the binding of the pre protein to the RSA site.</text>
</comment>
<comment type="similarity">
    <text evidence="3">Belongs to the plasmid mobilization pre family.</text>
</comment>
<sequence length="403" mass="47839">MSHSILRVARVKGSSNTNGIQRHNQRENKNYNNKDINHEETYKNYDLINAQNIKYKDKIDETIDENYSGKRKIRSDAIRHVDGLVTSDKDFFDDLSGEEIERFFKDSLEFLENEYGKENMLYATVHLDERVPHMHFGFVPLTEDGRLSAKEQLGNKKDFTQLQDRFNEYVNEKGYELERGTSKEVTEREHKAMDQYKKDTVFHKQELQEVKDELQKANKQLQSGIEHMRSTKPFDYENERTGLFSGREETGRKILTADEFERLQETISSAERIVDDYENIKSTDYYTENQELKKRRESLKEVVNTWKEGYHEKSKEVNKLKRENDSLNEQLNVSEKFQASTVTLYRAARANFPGFEKGFNRLKEKFFNDSKFERVGQFMDVVQDNVQKVDRKREKQRTDDLEM</sequence>
<proteinExistence type="inferred from homology"/>
<protein>
    <recommendedName>
        <fullName>Plasmid recombination enzyme type 1</fullName>
    </recommendedName>
    <alternativeName>
        <fullName>Mobilization protein</fullName>
    </alternativeName>
    <alternativeName>
        <fullName>Plasmid recombinase</fullName>
    </alternativeName>
</protein>
<accession>P03857</accession>